<proteinExistence type="evidence at protein level"/>
<name>US28_HCMVT</name>
<dbReference type="EMBL" id="AY174281">
    <property type="protein sequence ID" value="AAO22971.1"/>
    <property type="molecule type" value="Genomic_DNA"/>
</dbReference>
<dbReference type="PDB" id="5WB1">
    <property type="method" value="X-ray"/>
    <property type="resolution" value="3.51 A"/>
    <property type="chains" value="A=1-310"/>
</dbReference>
<dbReference type="PDB" id="5WB2">
    <property type="method" value="X-ray"/>
    <property type="resolution" value="3.50 A"/>
    <property type="chains" value="A=1-310"/>
</dbReference>
<dbReference type="PDBsum" id="5WB1"/>
<dbReference type="PDBsum" id="5WB2"/>
<dbReference type="SMR" id="P69333"/>
<dbReference type="GlyCosmos" id="P69333">
    <property type="glycosylation" value="1 site, No reported glycans"/>
</dbReference>
<dbReference type="ABCD" id="P69333">
    <property type="antibodies" value="1 sequenced antibody"/>
</dbReference>
<dbReference type="GO" id="GO:0020002">
    <property type="term" value="C:host cell plasma membrane"/>
    <property type="evidence" value="ECO:0007669"/>
    <property type="project" value="UniProtKB-SubCell"/>
</dbReference>
<dbReference type="GO" id="GO:0016020">
    <property type="term" value="C:membrane"/>
    <property type="evidence" value="ECO:0007669"/>
    <property type="project" value="UniProtKB-KW"/>
</dbReference>
<dbReference type="GO" id="GO:0019957">
    <property type="term" value="F:C-C chemokine binding"/>
    <property type="evidence" value="ECO:0007669"/>
    <property type="project" value="TreeGrafter"/>
</dbReference>
<dbReference type="GO" id="GO:0016493">
    <property type="term" value="F:C-C chemokine receptor activity"/>
    <property type="evidence" value="ECO:0007669"/>
    <property type="project" value="TreeGrafter"/>
</dbReference>
<dbReference type="GO" id="GO:0019722">
    <property type="term" value="P:calcium-mediated signaling"/>
    <property type="evidence" value="ECO:0007669"/>
    <property type="project" value="TreeGrafter"/>
</dbReference>
<dbReference type="GO" id="GO:0060326">
    <property type="term" value="P:cell chemotaxis"/>
    <property type="evidence" value="ECO:0007669"/>
    <property type="project" value="TreeGrafter"/>
</dbReference>
<dbReference type="GO" id="GO:0006955">
    <property type="term" value="P:immune response"/>
    <property type="evidence" value="ECO:0007669"/>
    <property type="project" value="TreeGrafter"/>
</dbReference>
<dbReference type="GO" id="GO:0007204">
    <property type="term" value="P:positive regulation of cytosolic calcium ion concentration"/>
    <property type="evidence" value="ECO:0007669"/>
    <property type="project" value="TreeGrafter"/>
</dbReference>
<dbReference type="CDD" id="cd14984">
    <property type="entry name" value="7tmA_Chemokine_R"/>
    <property type="match status" value="1"/>
</dbReference>
<dbReference type="Gene3D" id="1.20.1070.10">
    <property type="entry name" value="Rhodopsin 7-helix transmembrane proteins"/>
    <property type="match status" value="1"/>
</dbReference>
<dbReference type="InterPro" id="IPR050119">
    <property type="entry name" value="CCR1-9-like"/>
</dbReference>
<dbReference type="InterPro" id="IPR000355">
    <property type="entry name" value="Chemokine_rcpt"/>
</dbReference>
<dbReference type="InterPro" id="IPR000276">
    <property type="entry name" value="GPCR_Rhodpsn"/>
</dbReference>
<dbReference type="InterPro" id="IPR017452">
    <property type="entry name" value="GPCR_Rhodpsn_7TM"/>
</dbReference>
<dbReference type="PANTHER" id="PTHR10489">
    <property type="entry name" value="CELL ADHESION MOLECULE"/>
    <property type="match status" value="1"/>
</dbReference>
<dbReference type="PANTHER" id="PTHR10489:SF955">
    <property type="entry name" value="CX3C CHEMOKINE RECEPTOR 1"/>
    <property type="match status" value="1"/>
</dbReference>
<dbReference type="Pfam" id="PF00001">
    <property type="entry name" value="7tm_1"/>
    <property type="match status" value="1"/>
</dbReference>
<dbReference type="PRINTS" id="PR00657">
    <property type="entry name" value="CCCHEMOKINER"/>
</dbReference>
<dbReference type="PRINTS" id="PR00237">
    <property type="entry name" value="GPCRRHODOPSN"/>
</dbReference>
<dbReference type="SUPFAM" id="SSF81321">
    <property type="entry name" value="Family A G protein-coupled receptor-like"/>
    <property type="match status" value="1"/>
</dbReference>
<dbReference type="PROSITE" id="PS00237">
    <property type="entry name" value="G_PROTEIN_RECEP_F1_1"/>
    <property type="match status" value="1"/>
</dbReference>
<dbReference type="PROSITE" id="PS50262">
    <property type="entry name" value="G_PROTEIN_RECEP_F1_2"/>
    <property type="match status" value="1"/>
</dbReference>
<organismHost>
    <name type="scientific">Homo sapiens</name>
    <name type="common">Human</name>
    <dbReference type="NCBI Taxonomy" id="9606"/>
</organismHost>
<protein>
    <recommendedName>
        <fullName>G-protein coupled receptor homolog US28</fullName>
    </recommendedName>
    <alternativeName>
        <fullName>HHRF3</fullName>
    </alternativeName>
</protein>
<comment type="function">
    <text evidence="1 4">Receptor for a C-C type chemokine. Binds to a great number of different CC-chemokines including CCL5/RANTES, CCL2/MCP-1, CCL3/MIP-1-alpha as well as CX3CL1/Fractalkine (PubMed:29882741). Transduces signals resulting in the activation of MAP kinase signaling pathways and augmentation of intracellular calcium ion levels, leading to alterations in chemotactic behavior of vascular smooth muscle cells and macrophages. The US28 receptor also exhibits high levels of agonist-independent signaling activity and agonist-independent endocytosis. Interacts with the host Gi complex without activating it, thereby probably interfering with the chemokine-Gi signaling. May also function as a G protein sink to sequester G protein from the cell surface via internalization. Interacts with endogenous Gaq/11 subunits and thereby constitutively activates phospholipase C (By similarity).</text>
</comment>
<comment type="subunit">
    <text evidence="1 4">Interacts with host GPRASP1; this interaction targets US28 to lysosomes for degradation (By similarity). Interacts with host CX3CL1/Fractalkine (via N-terminus) (PubMed:29882741).</text>
</comment>
<comment type="subcellular location">
    <subcellularLocation>
        <location evidence="1">Host cell membrane</location>
        <topology evidence="1">Multi-pass membrane protein</topology>
    </subcellularLocation>
</comment>
<comment type="PTM">
    <text evidence="1">Phosphorylated. High phosphorylation occurs concomitantly with receptor endocytosis and correlate with low receptor presence at the plasma membrane.</text>
</comment>
<comment type="similarity">
    <text evidence="3">Belongs to the G-protein coupled receptor 1 family.</text>
</comment>
<feature type="chain" id="PRO_0000070247" description="G-protein coupled receptor homolog US28">
    <location>
        <begin position="1"/>
        <end position="354"/>
    </location>
</feature>
<feature type="topological domain" description="Extracellular" evidence="2">
    <location>
        <begin position="1"/>
        <end position="37"/>
    </location>
</feature>
<feature type="transmembrane region" description="Helical; Name=1" evidence="2">
    <location>
        <begin position="38"/>
        <end position="58"/>
    </location>
</feature>
<feature type="topological domain" description="Cytoplasmic" evidence="2">
    <location>
        <begin position="59"/>
        <end position="69"/>
    </location>
</feature>
<feature type="transmembrane region" description="Helical; Name=2" evidence="2">
    <location>
        <begin position="70"/>
        <end position="90"/>
    </location>
</feature>
<feature type="topological domain" description="Extracellular" evidence="2">
    <location>
        <begin position="91"/>
        <end position="101"/>
    </location>
</feature>
<feature type="transmembrane region" description="Helical; Name=3" evidence="2">
    <location>
        <begin position="102"/>
        <end position="122"/>
    </location>
</feature>
<feature type="topological domain" description="Cytoplasmic" evidence="2">
    <location>
        <begin position="123"/>
        <end position="145"/>
    </location>
</feature>
<feature type="transmembrane region" description="Helical; Name=4" evidence="2">
    <location>
        <begin position="146"/>
        <end position="166"/>
    </location>
</feature>
<feature type="topological domain" description="Extracellular" evidence="2">
    <location>
        <begin position="167"/>
        <end position="183"/>
    </location>
</feature>
<feature type="transmembrane region" description="Helical; Name=5" evidence="2">
    <location>
        <begin position="184"/>
        <end position="204"/>
    </location>
</feature>
<feature type="topological domain" description="Cytoplasmic" evidence="2">
    <location>
        <begin position="205"/>
        <end position="228"/>
    </location>
</feature>
<feature type="transmembrane region" description="Helical; Name=6" evidence="2">
    <location>
        <begin position="229"/>
        <end position="249"/>
    </location>
</feature>
<feature type="topological domain" description="Extracellular" evidence="2">
    <location>
        <begin position="250"/>
        <end position="273"/>
    </location>
</feature>
<feature type="transmembrane region" description="Helical; Name=7" evidence="2">
    <location>
        <begin position="274"/>
        <end position="294"/>
    </location>
</feature>
<feature type="topological domain" description="Cytoplasmic" evidence="2">
    <location>
        <begin position="295"/>
        <end position="354"/>
    </location>
</feature>
<feature type="glycosylation site" description="N-linked (GlcNAc...) asparagine; by host" evidence="2">
    <location>
        <position position="30"/>
    </location>
</feature>
<feature type="helix" evidence="7">
    <location>
        <begin position="26"/>
        <end position="59"/>
    </location>
</feature>
<feature type="helix" evidence="7">
    <location>
        <begin position="67"/>
        <end position="83"/>
    </location>
</feature>
<feature type="helix" evidence="7">
    <location>
        <begin position="86"/>
        <end position="94"/>
    </location>
</feature>
<feature type="helix" evidence="7">
    <location>
        <begin position="96"/>
        <end position="98"/>
    </location>
</feature>
<feature type="helix" evidence="7">
    <location>
        <begin position="101"/>
        <end position="133"/>
    </location>
</feature>
<feature type="helix" evidence="7">
    <location>
        <begin position="141"/>
        <end position="163"/>
    </location>
</feature>
<feature type="strand" evidence="7">
    <location>
        <begin position="166"/>
        <end position="169"/>
    </location>
</feature>
<feature type="strand" evidence="7">
    <location>
        <begin position="172"/>
        <end position="175"/>
    </location>
</feature>
<feature type="helix" evidence="7">
    <location>
        <begin position="184"/>
        <end position="196"/>
    </location>
</feature>
<feature type="helix" evidence="7">
    <location>
        <begin position="198"/>
        <end position="215"/>
    </location>
</feature>
<feature type="helix" evidence="7">
    <location>
        <begin position="223"/>
        <end position="255"/>
    </location>
</feature>
<feature type="helix" evidence="7">
    <location>
        <begin position="263"/>
        <end position="280"/>
    </location>
</feature>
<feature type="helix" evidence="7">
    <location>
        <begin position="283"/>
        <end position="290"/>
    </location>
</feature>
<feature type="turn" evidence="7">
    <location>
        <begin position="291"/>
        <end position="294"/>
    </location>
</feature>
<feature type="helix" evidence="7">
    <location>
        <begin position="296"/>
        <end position="306"/>
    </location>
</feature>
<organism>
    <name type="scientific">Human cytomegalovirus (strain Towne)</name>
    <name type="common">HHV-5</name>
    <name type="synonym">Human herpesvirus 5</name>
    <dbReference type="NCBI Taxonomy" id="10363"/>
    <lineage>
        <taxon>Viruses</taxon>
        <taxon>Duplodnaviria</taxon>
        <taxon>Heunggongvirae</taxon>
        <taxon>Peploviricota</taxon>
        <taxon>Herviviricetes</taxon>
        <taxon>Herpesvirales</taxon>
        <taxon>Orthoherpesviridae</taxon>
        <taxon>Betaherpesvirinae</taxon>
        <taxon>Cytomegalovirus</taxon>
        <taxon>Cytomegalovirus humanbeta5</taxon>
        <taxon>Human cytomegalovirus</taxon>
    </lineage>
</organism>
<gene>
    <name type="primary">US28</name>
</gene>
<accession>P69333</accession>
<accession>P09704</accession>
<accession>P32952</accession>
<accession>Q7M6H3</accession>
<sequence length="354" mass="41064">MTPTTTTAELTTEFDYDEDATPCVFTDVLNQSKPVTLFLYGVVFLFGSIGNFLVIFTITWRRRIQCSGDVYFINLAAADLLFVCTLPLWMQYLLDHNSLASVPCTLLTACFYVAMFASLCFITEIALDRYYAIVYMRYRPVKQACLFSIFWWIFAVIIAIPHFMVVTKKDNQCMTDYDYLEVSYPIILNVELMLGAFVIPLSVISYCYYRISRIVAVSQSRHKGRIVRVLIAVVLVFIIFWLPYHLTLFVDTLKLLKWISSSCEFERSLKRALILTESLAFCHCCLNPLLYVFVGTKFRQELHCLLAEFRQRLFSRDVSWYHSMSFSRRSSPSRRETSSDTLSDEVCRVSQIIP</sequence>
<reference key="1">
    <citation type="journal article" date="1993" name="Cell">
        <title>Molecular cloning, functional expression, and signaling characteristics of a C-C chemokine receptor.</title>
        <authorList>
            <person name="Neote K."/>
            <person name="Digregorio D."/>
            <person name="Mak J.Y."/>
            <person name="Horuk R."/>
            <person name="Schall T.J."/>
        </authorList>
    </citation>
    <scope>NUCLEOTIDE SEQUENCE [GENOMIC DNA]</scope>
</reference>
<reference key="2">
    <citation type="journal article" date="2003" name="J. Infect. Dis.">
        <title>Inter- and intragenic variations complicate the molecular epidemiology of human cytomegalovirus.</title>
        <authorList>
            <person name="Rasmussen L."/>
            <person name="Geissler A."/>
            <person name="Winters M."/>
        </authorList>
    </citation>
    <scope>NUCLEOTIDE SEQUENCE [GENOMIC DNA]</scope>
</reference>
<reference evidence="5 6" key="3">
    <citation type="journal article" date="2018" name="Elife">
        <title>Viral GPCR US28 can signal in response to chemokine agonists of nearly unlimited structural degeneracy.</title>
        <authorList>
            <person name="Miles T.F."/>
            <person name="Spiess K."/>
            <person name="Jude K.M."/>
            <person name="Tsutsumi N."/>
            <person name="Burg J.S."/>
            <person name="Ingram J.R."/>
            <person name="Waghray D."/>
            <person name="Hjorto G.M."/>
            <person name="Larsen O."/>
            <person name="Ploegh H.L."/>
            <person name="Rosenkilde M.M."/>
            <person name="Garcia K.C."/>
        </authorList>
    </citation>
    <scope>X-RAY CRYSTALLOGRAPHY (3.50 ANGSTROMS) OF 1-310 IN COMPLEX WITH HOST CX3CL1</scope>
    <scope>INTERACTION WITH HOST CX3CL1</scope>
    <scope>FUNCTION</scope>
</reference>
<evidence type="ECO:0000250" key="1">
    <source>
        <dbReference type="UniProtKB" id="P69332"/>
    </source>
</evidence>
<evidence type="ECO:0000255" key="2"/>
<evidence type="ECO:0000255" key="3">
    <source>
        <dbReference type="PROSITE-ProRule" id="PRU00521"/>
    </source>
</evidence>
<evidence type="ECO:0000269" key="4">
    <source>
    </source>
</evidence>
<evidence type="ECO:0007744" key="5">
    <source>
        <dbReference type="PDB" id="5WB1"/>
    </source>
</evidence>
<evidence type="ECO:0007744" key="6">
    <source>
        <dbReference type="PDB" id="5WB2"/>
    </source>
</evidence>
<evidence type="ECO:0007829" key="7">
    <source>
        <dbReference type="PDB" id="5WB2"/>
    </source>
</evidence>
<keyword id="KW-0002">3D-structure</keyword>
<keyword id="KW-0297">G-protein coupled receptor</keyword>
<keyword id="KW-0325">Glycoprotein</keyword>
<keyword id="KW-1032">Host cell membrane</keyword>
<keyword id="KW-1043">Host membrane</keyword>
<keyword id="KW-0945">Host-virus interaction</keyword>
<keyword id="KW-1086">Inhibition of host chemokines by virus</keyword>
<keyword id="KW-0472">Membrane</keyword>
<keyword id="KW-0675">Receptor</keyword>
<keyword id="KW-0807">Transducer</keyword>
<keyword id="KW-0812">Transmembrane</keyword>
<keyword id="KW-1133">Transmembrane helix</keyword>
<keyword id="KW-0899">Viral immunoevasion</keyword>